<evidence type="ECO:0000250" key="1">
    <source>
        <dbReference type="UniProtKB" id="Q5SWK7"/>
    </source>
</evidence>
<evidence type="ECO:0000255" key="2"/>
<evidence type="ECO:0000255" key="3">
    <source>
        <dbReference type="PROSITE-ProRule" id="PRU00175"/>
    </source>
</evidence>
<evidence type="ECO:0000256" key="4">
    <source>
        <dbReference type="SAM" id="MobiDB-lite"/>
    </source>
</evidence>
<evidence type="ECO:0000303" key="5">
    <source>
    </source>
</evidence>
<evidence type="ECO:0000305" key="6"/>
<evidence type="ECO:0000312" key="7">
    <source>
        <dbReference type="PROSITE" id="PS50089"/>
    </source>
</evidence>
<proteinExistence type="evidence at protein level"/>
<accession>Q96MT1</accession>
<accession>B7Z903</accession>
<accession>B7Z949</accession>
<accession>E7EVI7</accession>
<accession>Q8IVP7</accession>
<reference key="1">
    <citation type="journal article" date="2004" name="Nat. Genet.">
        <title>Complete sequencing and characterization of 21,243 full-length human cDNAs.</title>
        <authorList>
            <person name="Ota T."/>
            <person name="Suzuki Y."/>
            <person name="Nishikawa T."/>
            <person name="Otsuki T."/>
            <person name="Sugiyama T."/>
            <person name="Irie R."/>
            <person name="Wakamatsu A."/>
            <person name="Hayashi K."/>
            <person name="Sato H."/>
            <person name="Nagai K."/>
            <person name="Kimura K."/>
            <person name="Makita H."/>
            <person name="Sekine M."/>
            <person name="Obayashi M."/>
            <person name="Nishi T."/>
            <person name="Shibahara T."/>
            <person name="Tanaka T."/>
            <person name="Ishii S."/>
            <person name="Yamamoto J."/>
            <person name="Saito K."/>
            <person name="Kawai Y."/>
            <person name="Isono Y."/>
            <person name="Nakamura Y."/>
            <person name="Nagahari K."/>
            <person name="Murakami K."/>
            <person name="Yasuda T."/>
            <person name="Iwayanagi T."/>
            <person name="Wagatsuma M."/>
            <person name="Shiratori A."/>
            <person name="Sudo H."/>
            <person name="Hosoiri T."/>
            <person name="Kaku Y."/>
            <person name="Kodaira H."/>
            <person name="Kondo H."/>
            <person name="Sugawara M."/>
            <person name="Takahashi M."/>
            <person name="Kanda K."/>
            <person name="Yokoi T."/>
            <person name="Furuya T."/>
            <person name="Kikkawa E."/>
            <person name="Omura Y."/>
            <person name="Abe K."/>
            <person name="Kamihara K."/>
            <person name="Katsuta N."/>
            <person name="Sato K."/>
            <person name="Tanikawa M."/>
            <person name="Yamazaki M."/>
            <person name="Ninomiya K."/>
            <person name="Ishibashi T."/>
            <person name="Yamashita H."/>
            <person name="Murakawa K."/>
            <person name="Fujimori K."/>
            <person name="Tanai H."/>
            <person name="Kimata M."/>
            <person name="Watanabe M."/>
            <person name="Hiraoka S."/>
            <person name="Chiba Y."/>
            <person name="Ishida S."/>
            <person name="Ono Y."/>
            <person name="Takiguchi S."/>
            <person name="Watanabe S."/>
            <person name="Yosida M."/>
            <person name="Hotuta T."/>
            <person name="Kusano J."/>
            <person name="Kanehori K."/>
            <person name="Takahashi-Fujii A."/>
            <person name="Hara H."/>
            <person name="Tanase T.-O."/>
            <person name="Nomura Y."/>
            <person name="Togiya S."/>
            <person name="Komai F."/>
            <person name="Hara R."/>
            <person name="Takeuchi K."/>
            <person name="Arita M."/>
            <person name="Imose N."/>
            <person name="Musashino K."/>
            <person name="Yuuki H."/>
            <person name="Oshima A."/>
            <person name="Sasaki N."/>
            <person name="Aotsuka S."/>
            <person name="Yoshikawa Y."/>
            <person name="Matsunawa H."/>
            <person name="Ichihara T."/>
            <person name="Shiohata N."/>
            <person name="Sano S."/>
            <person name="Moriya S."/>
            <person name="Momiyama H."/>
            <person name="Satoh N."/>
            <person name="Takami S."/>
            <person name="Terashima Y."/>
            <person name="Suzuki O."/>
            <person name="Nakagawa S."/>
            <person name="Senoh A."/>
            <person name="Mizoguchi H."/>
            <person name="Goto Y."/>
            <person name="Shimizu F."/>
            <person name="Wakebe H."/>
            <person name="Hishigaki H."/>
            <person name="Watanabe T."/>
            <person name="Sugiyama A."/>
            <person name="Takemoto M."/>
            <person name="Kawakami B."/>
            <person name="Yamazaki M."/>
            <person name="Watanabe K."/>
            <person name="Kumagai A."/>
            <person name="Itakura S."/>
            <person name="Fukuzumi Y."/>
            <person name="Fujimori Y."/>
            <person name="Komiyama M."/>
            <person name="Tashiro H."/>
            <person name="Tanigami A."/>
            <person name="Fujiwara T."/>
            <person name="Ono T."/>
            <person name="Yamada K."/>
            <person name="Fujii Y."/>
            <person name="Ozaki K."/>
            <person name="Hirao M."/>
            <person name="Ohmori Y."/>
            <person name="Kawabata A."/>
            <person name="Hikiji T."/>
            <person name="Kobatake N."/>
            <person name="Inagaki H."/>
            <person name="Ikema Y."/>
            <person name="Okamoto S."/>
            <person name="Okitani R."/>
            <person name="Kawakami T."/>
            <person name="Noguchi S."/>
            <person name="Itoh T."/>
            <person name="Shigeta K."/>
            <person name="Senba T."/>
            <person name="Matsumura K."/>
            <person name="Nakajima Y."/>
            <person name="Mizuno T."/>
            <person name="Morinaga M."/>
            <person name="Sasaki M."/>
            <person name="Togashi T."/>
            <person name="Oyama M."/>
            <person name="Hata H."/>
            <person name="Watanabe M."/>
            <person name="Komatsu T."/>
            <person name="Mizushima-Sugano J."/>
            <person name="Satoh T."/>
            <person name="Shirai Y."/>
            <person name="Takahashi Y."/>
            <person name="Nakagawa K."/>
            <person name="Okumura K."/>
            <person name="Nagase T."/>
            <person name="Nomura N."/>
            <person name="Kikuchi H."/>
            <person name="Masuho Y."/>
            <person name="Yamashita R."/>
            <person name="Nakai K."/>
            <person name="Yada T."/>
            <person name="Nakamura Y."/>
            <person name="Ohara O."/>
            <person name="Isogai T."/>
            <person name="Sugano S."/>
        </authorList>
    </citation>
    <scope>NUCLEOTIDE SEQUENCE [LARGE SCALE MRNA] (ISOFORMS 2; 3; 4 AND 5)</scope>
    <source>
        <tissue>Trachea</tissue>
    </source>
</reference>
<reference key="2">
    <citation type="journal article" date="2004" name="Nature">
        <title>The DNA sequence and comparative analysis of human chromosome 5.</title>
        <authorList>
            <person name="Schmutz J."/>
            <person name="Martin J."/>
            <person name="Terry A."/>
            <person name="Couronne O."/>
            <person name="Grimwood J."/>
            <person name="Lowry S."/>
            <person name="Gordon L.A."/>
            <person name="Scott D."/>
            <person name="Xie G."/>
            <person name="Huang W."/>
            <person name="Hellsten U."/>
            <person name="Tran-Gyamfi M."/>
            <person name="She X."/>
            <person name="Prabhakar S."/>
            <person name="Aerts A."/>
            <person name="Altherr M."/>
            <person name="Bajorek E."/>
            <person name="Black S."/>
            <person name="Branscomb E."/>
            <person name="Caoile C."/>
            <person name="Challacombe J.F."/>
            <person name="Chan Y.M."/>
            <person name="Denys M."/>
            <person name="Detter J.C."/>
            <person name="Escobar J."/>
            <person name="Flowers D."/>
            <person name="Fotopulos D."/>
            <person name="Glavina T."/>
            <person name="Gomez M."/>
            <person name="Gonzales E."/>
            <person name="Goodstein D."/>
            <person name="Grigoriev I."/>
            <person name="Groza M."/>
            <person name="Hammon N."/>
            <person name="Hawkins T."/>
            <person name="Haydu L."/>
            <person name="Israni S."/>
            <person name="Jett J."/>
            <person name="Kadner K."/>
            <person name="Kimball H."/>
            <person name="Kobayashi A."/>
            <person name="Lopez F."/>
            <person name="Lou Y."/>
            <person name="Martinez D."/>
            <person name="Medina C."/>
            <person name="Morgan J."/>
            <person name="Nandkeshwar R."/>
            <person name="Noonan J.P."/>
            <person name="Pitluck S."/>
            <person name="Pollard M."/>
            <person name="Predki P."/>
            <person name="Priest J."/>
            <person name="Ramirez L."/>
            <person name="Retterer J."/>
            <person name="Rodriguez A."/>
            <person name="Rogers S."/>
            <person name="Salamov A."/>
            <person name="Salazar A."/>
            <person name="Thayer N."/>
            <person name="Tice H."/>
            <person name="Tsai M."/>
            <person name="Ustaszewska A."/>
            <person name="Vo N."/>
            <person name="Wheeler J."/>
            <person name="Wu K."/>
            <person name="Yang J."/>
            <person name="Dickson M."/>
            <person name="Cheng J.-F."/>
            <person name="Eichler E.E."/>
            <person name="Olsen A."/>
            <person name="Pennacchio L.A."/>
            <person name="Rokhsar D.S."/>
            <person name="Richardson P."/>
            <person name="Lucas S.M."/>
            <person name="Myers R.M."/>
            <person name="Rubin E.M."/>
        </authorList>
    </citation>
    <scope>NUCLEOTIDE SEQUENCE [LARGE SCALE GENOMIC DNA]</scope>
</reference>
<reference key="3">
    <citation type="journal article" date="2004" name="Genome Res.">
        <title>The status, quality, and expansion of the NIH full-length cDNA project: the Mammalian Gene Collection (MGC).</title>
        <authorList>
            <consortium name="The MGC Project Team"/>
        </authorList>
    </citation>
    <scope>NUCLEOTIDE SEQUENCE [LARGE SCALE MRNA] (ISOFORM 1)</scope>
    <source>
        <tissue>Testis</tissue>
    </source>
</reference>
<protein>
    <recommendedName>
        <fullName evidence="6">RING finger protein 145</fullName>
        <ecNumber evidence="1">2.3.2.27</ecNumber>
    </recommendedName>
</protein>
<sequence length="663" mass="75617">MAAKEKLEAVLNVALRVPSIMLLDVLYRWDVSSFFQQIQRSSLSNNPLFQYKYLALNMHYVGYILSVVLLTLPRQHLVQLYLYFLTALLLYAGHQISRDYVRSELEFAYEGPMYLEPLSMNRFTTALIGQLVVCTLCSCVMKTKQIWLFSAHMLPLLARLCLVPLETIVIINKFAMIFTGLEVLYFLGSNLLVPYNLAKSAYRELVQVVEVYGLLALGMSLWNQLVVPVLFMVFWLVLFALQIYSYFSTRDQPASRERLLFLFLTSIAECCSTPYSLLGLVFTVSFVALGVLTLCKFYLQGYRAFMNDPAMNRGMTEGVTLLILAVQTGLIELQVVHRAFLLSIILFIVVASILQSMLEIADPIVLALGASRDKSLWKHFRAVSLCLFLLVFPAYMAYMICQFFHMDFWLLIIISSSILTSLQVLGTLFIYVLFMVEEFRKEPVENMDDVIYYVNGTYRLLEFLVALCVVAYGVSETIFGEWTVMGSMIIFIHSYYNVWLRAQLGWKSFLLRRDAVNKIKSLPIATKEQLEKHNDICAICYQDMKSAVITPCSHFFHAGCLKKWLYVQETCPLCHCHLKNSSQLPGLGTEPVLQPHAGAEQNVMFQEGTEPPGQEHTPGTRIQEGSRDNNEYIARRPDNQEGAFDPKEYPHSAKDEAHPVESA</sequence>
<comment type="function">
    <text evidence="1">E3 ubiquitin ligase that catalyzes the direct transfer of ubiquitin from E2 ubiquitin-conjugating enzyme to a specific substrate. In response to bacterial infection, negatively regulates the phagocyte oxidative burst by controlling the turnover of the NADPH oxidase complex subunits. Promotes monoubiquitination of CYBA and 'Lys-48'-linked polyubiquitination and degradation of CYBB NADPH oxidase catalytic subunits, both essential for the generation of antimicrobial reactive oxygen species. Involved in the maintenance of cholesterol homeostasis. In response to high sterol concentrations ubiquitinates HMGCR, a rate-limiting enzyme in cholesterol biosynthesis, and targets it for degradation. The interaction with INSIG1 is required for this function. In addition, triggers ubiquitination of SCAP, likely inhibiting its transport to the Golgi apparatus and the subsequent processing/maturation of SREBPF2, ultimately down-regulating cholesterol biosynthesis.</text>
</comment>
<comment type="catalytic activity">
    <reaction evidence="1">
        <text>S-ubiquitinyl-[E2 ubiquitin-conjugating enzyme]-L-cysteine + [acceptor protein]-L-lysine = [E2 ubiquitin-conjugating enzyme]-L-cysteine + N(6)-ubiquitinyl-[acceptor protein]-L-lysine.</text>
        <dbReference type="EC" id="2.3.2.27"/>
    </reaction>
</comment>
<comment type="subunit">
    <text evidence="1">Interacts (via YLYF motif) with INSIG1 and INSIG2.</text>
</comment>
<comment type="subcellular location">
    <subcellularLocation>
        <location evidence="1">Endoplasmic reticulum membrane</location>
        <topology evidence="2">Multi-pass membrane protein</topology>
    </subcellularLocation>
</comment>
<comment type="alternative products">
    <event type="alternative splicing"/>
    <isoform>
        <id>Q96MT1-1</id>
        <name>1</name>
        <sequence type="displayed"/>
    </isoform>
    <isoform>
        <id>Q96MT1-2</id>
        <name>2</name>
        <sequence type="described" ref="VSP_037501"/>
    </isoform>
    <isoform>
        <id>Q96MT1-3</id>
        <name>3</name>
        <sequence type="described" ref="VSP_043661"/>
    </isoform>
    <isoform>
        <id>Q96MT1-4</id>
        <name>4</name>
        <sequence type="described" ref="VSP_043662"/>
    </isoform>
    <isoform>
        <id>Q96MT1-5</id>
        <name>5</name>
        <sequence type="described" ref="VSP_044539"/>
    </isoform>
</comment>
<comment type="sequence caution" evidence="6">
    <conflict type="frameshift">
        <sequence resource="EMBL" id="AK308394"/>
    </conflict>
</comment>
<keyword id="KW-0025">Alternative splicing</keyword>
<keyword id="KW-0256">Endoplasmic reticulum</keyword>
<keyword id="KW-0472">Membrane</keyword>
<keyword id="KW-0479">Metal-binding</keyword>
<keyword id="KW-1267">Proteomics identification</keyword>
<keyword id="KW-1185">Reference proteome</keyword>
<keyword id="KW-0808">Transferase</keyword>
<keyword id="KW-0812">Transmembrane</keyword>
<keyword id="KW-1133">Transmembrane helix</keyword>
<keyword id="KW-0833">Ubl conjugation pathway</keyword>
<keyword id="KW-0862">Zinc</keyword>
<keyword id="KW-0863">Zinc-finger</keyword>
<organism>
    <name type="scientific">Homo sapiens</name>
    <name type="common">Human</name>
    <dbReference type="NCBI Taxonomy" id="9606"/>
    <lineage>
        <taxon>Eukaryota</taxon>
        <taxon>Metazoa</taxon>
        <taxon>Chordata</taxon>
        <taxon>Craniata</taxon>
        <taxon>Vertebrata</taxon>
        <taxon>Euteleostomi</taxon>
        <taxon>Mammalia</taxon>
        <taxon>Eutheria</taxon>
        <taxon>Euarchontoglires</taxon>
        <taxon>Primates</taxon>
        <taxon>Haplorrhini</taxon>
        <taxon>Catarrhini</taxon>
        <taxon>Hominidae</taxon>
        <taxon>Homo</taxon>
    </lineage>
</organism>
<gene>
    <name evidence="7" type="primary">RNF145</name>
</gene>
<dbReference type="EC" id="2.3.2.27" evidence="1"/>
<dbReference type="EMBL" id="AK056513">
    <property type="protein sequence ID" value="BAB71200.1"/>
    <property type="molecule type" value="mRNA"/>
</dbReference>
<dbReference type="EMBL" id="AK304228">
    <property type="protein sequence ID" value="BAH14139.1"/>
    <property type="molecule type" value="mRNA"/>
</dbReference>
<dbReference type="EMBL" id="AK304435">
    <property type="protein sequence ID" value="BAH14185.1"/>
    <property type="molecule type" value="mRNA"/>
</dbReference>
<dbReference type="EMBL" id="AK308394">
    <property type="status" value="NOT_ANNOTATED_CDS"/>
    <property type="molecule type" value="mRNA"/>
</dbReference>
<dbReference type="EMBL" id="AC134043">
    <property type="status" value="NOT_ANNOTATED_CDS"/>
    <property type="molecule type" value="Genomic_DNA"/>
</dbReference>
<dbReference type="EMBL" id="BC042684">
    <property type="protein sequence ID" value="AAH42684.1"/>
    <property type="molecule type" value="mRNA"/>
</dbReference>
<dbReference type="CCDS" id="CCDS4344.1">
    <molecule id="Q96MT1-2"/>
</dbReference>
<dbReference type="CCDS" id="CCDS56390.1">
    <molecule id="Q96MT1-1"/>
</dbReference>
<dbReference type="CCDS" id="CCDS56391.1">
    <molecule id="Q96MT1-4"/>
</dbReference>
<dbReference type="CCDS" id="CCDS56392.1">
    <molecule id="Q96MT1-3"/>
</dbReference>
<dbReference type="CCDS" id="CCDS56393.1">
    <molecule id="Q96MT1-5"/>
</dbReference>
<dbReference type="RefSeq" id="NP_001186309.1">
    <molecule id="Q96MT1-5"/>
    <property type="nucleotide sequence ID" value="NM_001199380.2"/>
</dbReference>
<dbReference type="RefSeq" id="NP_001186310.1">
    <molecule id="Q96MT1-3"/>
    <property type="nucleotide sequence ID" value="NM_001199381.2"/>
</dbReference>
<dbReference type="RefSeq" id="NP_001186311.1">
    <molecule id="Q96MT1-4"/>
    <property type="nucleotide sequence ID" value="NM_001199382.2"/>
</dbReference>
<dbReference type="RefSeq" id="NP_001186312.1">
    <molecule id="Q96MT1-1"/>
    <property type="nucleotide sequence ID" value="NM_001199383.2"/>
</dbReference>
<dbReference type="RefSeq" id="NP_653327.1">
    <molecule id="Q96MT1-2"/>
    <property type="nucleotide sequence ID" value="NM_144726.3"/>
</dbReference>
<dbReference type="RefSeq" id="XP_016864627.1">
    <molecule id="Q96MT1-1"/>
    <property type="nucleotide sequence ID" value="XM_017009138.3"/>
</dbReference>
<dbReference type="RefSeq" id="XP_054207832.1">
    <molecule id="Q96MT1-1"/>
    <property type="nucleotide sequence ID" value="XM_054351857.1"/>
</dbReference>
<dbReference type="SMR" id="Q96MT1"/>
<dbReference type="BioGRID" id="127521">
    <property type="interactions" value="36"/>
</dbReference>
<dbReference type="FunCoup" id="Q96MT1">
    <property type="interactions" value="1306"/>
</dbReference>
<dbReference type="IntAct" id="Q96MT1">
    <property type="interactions" value="24"/>
</dbReference>
<dbReference type="MINT" id="Q96MT1"/>
<dbReference type="STRING" id="9606.ENSP00000430955"/>
<dbReference type="GlyGen" id="Q96MT1">
    <property type="glycosylation" value="1 site, 1 O-linked glycan (1 site)"/>
</dbReference>
<dbReference type="iPTMnet" id="Q96MT1"/>
<dbReference type="PhosphoSitePlus" id="Q96MT1"/>
<dbReference type="SwissPalm" id="Q96MT1"/>
<dbReference type="BioMuta" id="RNF145"/>
<dbReference type="DMDM" id="152060502"/>
<dbReference type="jPOST" id="Q96MT1"/>
<dbReference type="MassIVE" id="Q96MT1"/>
<dbReference type="PaxDb" id="9606-ENSP00000430955"/>
<dbReference type="PeptideAtlas" id="Q96MT1"/>
<dbReference type="ProteomicsDB" id="18647"/>
<dbReference type="ProteomicsDB" id="77398">
    <molecule id="Q96MT1-1"/>
</dbReference>
<dbReference type="ProteomicsDB" id="77399">
    <molecule id="Q96MT1-2"/>
</dbReference>
<dbReference type="ProteomicsDB" id="77400">
    <molecule id="Q96MT1-3"/>
</dbReference>
<dbReference type="ProteomicsDB" id="77401">
    <molecule id="Q96MT1-4"/>
</dbReference>
<dbReference type="Antibodypedia" id="28490">
    <property type="antibodies" value="90 antibodies from 17 providers"/>
</dbReference>
<dbReference type="DNASU" id="153830"/>
<dbReference type="Ensembl" id="ENST00000274542.6">
    <molecule id="Q96MT1-2"/>
    <property type="protein sequence ID" value="ENSP00000274542.2"/>
    <property type="gene ID" value="ENSG00000145860.13"/>
</dbReference>
<dbReference type="Ensembl" id="ENST00000424310.7">
    <molecule id="Q96MT1-1"/>
    <property type="protein sequence ID" value="ENSP00000409064.2"/>
    <property type="gene ID" value="ENSG00000145860.13"/>
</dbReference>
<dbReference type="Ensembl" id="ENST00000518802.5">
    <molecule id="Q96MT1-5"/>
    <property type="protein sequence ID" value="ENSP00000430955.1"/>
    <property type="gene ID" value="ENSG00000145860.13"/>
</dbReference>
<dbReference type="Ensembl" id="ENST00000519865.5">
    <molecule id="Q96MT1-1"/>
    <property type="protein sequence ID" value="ENSP00000430397.1"/>
    <property type="gene ID" value="ENSG00000145860.13"/>
</dbReference>
<dbReference type="Ensembl" id="ENST00000520638.1">
    <molecule id="Q96MT1-4"/>
    <property type="protein sequence ID" value="ENSP00000429071.1"/>
    <property type="gene ID" value="ENSG00000145860.13"/>
</dbReference>
<dbReference type="Ensembl" id="ENST00000521606.6">
    <molecule id="Q96MT1-3"/>
    <property type="protein sequence ID" value="ENSP00000430753.2"/>
    <property type="gene ID" value="ENSG00000145860.13"/>
</dbReference>
<dbReference type="GeneID" id="153830"/>
<dbReference type="KEGG" id="hsa:153830"/>
<dbReference type="MANE-Select" id="ENST00000424310.7">
    <property type="protein sequence ID" value="ENSP00000409064.2"/>
    <property type="RefSeq nucleotide sequence ID" value="NM_001199383.2"/>
    <property type="RefSeq protein sequence ID" value="NP_001186312.1"/>
</dbReference>
<dbReference type="UCSC" id="uc003lxo.2">
    <molecule id="Q96MT1-1"/>
    <property type="organism name" value="human"/>
</dbReference>
<dbReference type="AGR" id="HGNC:20853"/>
<dbReference type="CTD" id="153830"/>
<dbReference type="DisGeNET" id="153830"/>
<dbReference type="GeneCards" id="RNF145"/>
<dbReference type="HGNC" id="HGNC:20853">
    <property type="gene designation" value="RNF145"/>
</dbReference>
<dbReference type="HPA" id="ENSG00000145860">
    <property type="expression patterns" value="Low tissue specificity"/>
</dbReference>
<dbReference type="MIM" id="620640">
    <property type="type" value="gene"/>
</dbReference>
<dbReference type="neXtProt" id="NX_Q96MT1"/>
<dbReference type="OpenTargets" id="ENSG00000145860"/>
<dbReference type="PharmGKB" id="PA134876286"/>
<dbReference type="VEuPathDB" id="HostDB:ENSG00000145860"/>
<dbReference type="eggNOG" id="KOG0802">
    <property type="taxonomic scope" value="Eukaryota"/>
</dbReference>
<dbReference type="GeneTree" id="ENSGT00940000157281"/>
<dbReference type="HOGENOM" id="CLU_016467_1_0_1"/>
<dbReference type="InParanoid" id="Q96MT1"/>
<dbReference type="OrthoDB" id="4752984at2759"/>
<dbReference type="PAN-GO" id="Q96MT1">
    <property type="GO annotations" value="3 GO annotations based on evolutionary models"/>
</dbReference>
<dbReference type="PhylomeDB" id="Q96MT1"/>
<dbReference type="TreeFam" id="TF318635"/>
<dbReference type="PathwayCommons" id="Q96MT1"/>
<dbReference type="SignaLink" id="Q96MT1"/>
<dbReference type="SIGNOR" id="Q96MT1"/>
<dbReference type="BioGRID-ORCS" id="153830">
    <property type="hits" value="45 hits in 1193 CRISPR screens"/>
</dbReference>
<dbReference type="ChiTaRS" id="RNF145">
    <property type="organism name" value="human"/>
</dbReference>
<dbReference type="GenomeRNAi" id="153830"/>
<dbReference type="Pharos" id="Q96MT1">
    <property type="development level" value="Tbio"/>
</dbReference>
<dbReference type="PRO" id="PR:Q96MT1"/>
<dbReference type="Proteomes" id="UP000005640">
    <property type="component" value="Chromosome 5"/>
</dbReference>
<dbReference type="RNAct" id="Q96MT1">
    <property type="molecule type" value="protein"/>
</dbReference>
<dbReference type="Bgee" id="ENSG00000145860">
    <property type="expression patterns" value="Expressed in nasal cavity epithelium and 186 other cell types or tissues"/>
</dbReference>
<dbReference type="GO" id="GO:0012505">
    <property type="term" value="C:endomembrane system"/>
    <property type="evidence" value="ECO:0000318"/>
    <property type="project" value="GO_Central"/>
</dbReference>
<dbReference type="GO" id="GO:0005789">
    <property type="term" value="C:endoplasmic reticulum membrane"/>
    <property type="evidence" value="ECO:0007669"/>
    <property type="project" value="UniProtKB-SubCell"/>
</dbReference>
<dbReference type="GO" id="GO:0061630">
    <property type="term" value="F:ubiquitin protein ligase activity"/>
    <property type="evidence" value="ECO:0000318"/>
    <property type="project" value="GO_Central"/>
</dbReference>
<dbReference type="GO" id="GO:0008270">
    <property type="term" value="F:zinc ion binding"/>
    <property type="evidence" value="ECO:0007669"/>
    <property type="project" value="UniProtKB-KW"/>
</dbReference>
<dbReference type="GO" id="GO:0036503">
    <property type="term" value="P:ERAD pathway"/>
    <property type="evidence" value="ECO:0000318"/>
    <property type="project" value="GO_Central"/>
</dbReference>
<dbReference type="GO" id="GO:0043161">
    <property type="term" value="P:proteasome-mediated ubiquitin-dependent protein catabolic process"/>
    <property type="evidence" value="ECO:0000318"/>
    <property type="project" value="GO_Central"/>
</dbReference>
<dbReference type="CDD" id="cd16684">
    <property type="entry name" value="RING-H2_RNF145"/>
    <property type="match status" value="1"/>
</dbReference>
<dbReference type="FunFam" id="3.30.40.10:FF:000145">
    <property type="entry name" value="RING finger protein 145"/>
    <property type="match status" value="1"/>
</dbReference>
<dbReference type="Gene3D" id="3.30.40.10">
    <property type="entry name" value="Zinc/RING finger domain, C3HC4 (zinc finger)"/>
    <property type="match status" value="1"/>
</dbReference>
<dbReference type="InterPro" id="IPR050731">
    <property type="entry name" value="HRD1_E3_ubiq-ligases"/>
</dbReference>
<dbReference type="InterPro" id="IPR047823">
    <property type="entry name" value="RNF145_RING-H2"/>
</dbReference>
<dbReference type="InterPro" id="IPR025754">
    <property type="entry name" value="TRC8_N_dom"/>
</dbReference>
<dbReference type="InterPro" id="IPR001841">
    <property type="entry name" value="Znf_RING"/>
</dbReference>
<dbReference type="InterPro" id="IPR011016">
    <property type="entry name" value="Znf_RING-CH"/>
</dbReference>
<dbReference type="InterPro" id="IPR013083">
    <property type="entry name" value="Znf_RING/FYVE/PHD"/>
</dbReference>
<dbReference type="PANTHER" id="PTHR22763:SF167">
    <property type="entry name" value="RING FINGER PROTEIN 145"/>
    <property type="match status" value="1"/>
</dbReference>
<dbReference type="PANTHER" id="PTHR22763">
    <property type="entry name" value="RING ZINC FINGER PROTEIN"/>
    <property type="match status" value="1"/>
</dbReference>
<dbReference type="Pfam" id="PF13705">
    <property type="entry name" value="TRC8_N"/>
    <property type="match status" value="1"/>
</dbReference>
<dbReference type="Pfam" id="PF13639">
    <property type="entry name" value="zf-RING_2"/>
    <property type="match status" value="1"/>
</dbReference>
<dbReference type="SMART" id="SM00184">
    <property type="entry name" value="RING"/>
    <property type="match status" value="1"/>
</dbReference>
<dbReference type="SMART" id="SM00744">
    <property type="entry name" value="RINGv"/>
    <property type="match status" value="1"/>
</dbReference>
<dbReference type="SUPFAM" id="SSF57850">
    <property type="entry name" value="RING/U-box"/>
    <property type="match status" value="1"/>
</dbReference>
<dbReference type="PROSITE" id="PS50089">
    <property type="entry name" value="ZF_RING_2"/>
    <property type="match status" value="1"/>
</dbReference>
<feature type="chain" id="PRO_0000294024" description="RING finger protein 145">
    <location>
        <begin position="1"/>
        <end position="663"/>
    </location>
</feature>
<feature type="transmembrane region" description="Helical" evidence="2">
    <location>
        <begin position="53"/>
        <end position="73"/>
    </location>
</feature>
<feature type="transmembrane region" description="Helical" evidence="2">
    <location>
        <begin position="77"/>
        <end position="97"/>
    </location>
</feature>
<feature type="transmembrane region" description="Helical" evidence="2">
    <location>
        <begin position="123"/>
        <end position="143"/>
    </location>
</feature>
<feature type="transmembrane region" description="Helical" evidence="2">
    <location>
        <begin position="146"/>
        <end position="166"/>
    </location>
</feature>
<feature type="transmembrane region" description="Helical" evidence="2">
    <location>
        <begin position="168"/>
        <end position="188"/>
    </location>
</feature>
<feature type="transmembrane region" description="Helical" evidence="2">
    <location>
        <begin position="205"/>
        <end position="222"/>
    </location>
</feature>
<feature type="transmembrane region" description="Helical" evidence="2">
    <location>
        <begin position="225"/>
        <end position="245"/>
    </location>
</feature>
<feature type="transmembrane region" description="Helical" evidence="2">
    <location>
        <begin position="275"/>
        <end position="295"/>
    </location>
</feature>
<feature type="transmembrane region" description="Helical" evidence="2">
    <location>
        <begin position="316"/>
        <end position="336"/>
    </location>
</feature>
<feature type="transmembrane region" description="Helical" evidence="2">
    <location>
        <begin position="340"/>
        <end position="360"/>
    </location>
</feature>
<feature type="transmembrane region" description="Helical" evidence="2">
    <location>
        <begin position="384"/>
        <end position="404"/>
    </location>
</feature>
<feature type="transmembrane region" description="Helical" evidence="2">
    <location>
        <begin position="410"/>
        <end position="430"/>
    </location>
</feature>
<feature type="transmembrane region" description="Helical" evidence="2">
    <location>
        <begin position="460"/>
        <end position="480"/>
    </location>
</feature>
<feature type="transmembrane region" description="Helical" evidence="2">
    <location>
        <begin position="482"/>
        <end position="502"/>
    </location>
</feature>
<feature type="zinc finger region" description="RING-type; atypical" evidence="3">
    <location>
        <begin position="537"/>
        <end position="575"/>
    </location>
</feature>
<feature type="region of interest" description="Disordered" evidence="4">
    <location>
        <begin position="607"/>
        <end position="663"/>
    </location>
</feature>
<feature type="short sequence motif" description="YLYF motif" evidence="1">
    <location>
        <begin position="81"/>
        <end position="84"/>
    </location>
</feature>
<feature type="compositionally biased region" description="Basic and acidic residues" evidence="4">
    <location>
        <begin position="624"/>
        <end position="663"/>
    </location>
</feature>
<feature type="active site" evidence="1">
    <location>
        <position position="537"/>
    </location>
</feature>
<feature type="splice variant" id="VSP_037501" description="In isoform 2." evidence="5">
    <original>M</original>
    <variation>MMRNHRIASSLCGDQVFSKKKKKKKKNNM</variation>
    <location>
        <position position="1"/>
    </location>
</feature>
<feature type="splice variant" id="VSP_043661" description="In isoform 3." evidence="5">
    <original>M</original>
    <variation>MAEVVFSKKKKKKKKNNM</variation>
    <location>
        <position position="1"/>
    </location>
</feature>
<feature type="splice variant" id="VSP_043662" description="In isoform 4." evidence="5">
    <original>M</original>
    <variation>MVFSKKKKKKKKNNM</variation>
    <location>
        <position position="1"/>
    </location>
</feature>
<feature type="splice variant" id="VSP_044539" description="In isoform 5." evidence="5">
    <original>M</original>
    <variation>MHRDRISPSNSPTWSLQVFSKKKKKKKKNNM</variation>
    <location>
        <position position="1"/>
    </location>
</feature>
<feature type="sequence conflict" description="In Ref. 3; AAH42684." evidence="6" ref="3">
    <original>A</original>
    <variation>V</variation>
    <location>
        <position position="9"/>
    </location>
</feature>
<feature type="sequence conflict" description="In Ref. 3; AAH42684." evidence="6" ref="3">
    <original>V</original>
    <variation>A</variation>
    <location>
        <position position="383"/>
    </location>
</feature>
<feature type="sequence conflict" description="In Ref. 1; AK308394." evidence="6" ref="1">
    <original>R</original>
    <variation>W</variation>
    <location>
        <position position="501"/>
    </location>
</feature>
<feature type="sequence conflict" description="In Ref. 3; AAH42684." evidence="6" ref="3">
    <original>A</original>
    <variation>V</variation>
    <location>
        <position position="657"/>
    </location>
</feature>
<name>RN145_HUMAN</name>